<evidence type="ECO:0000255" key="1">
    <source>
        <dbReference type="HAMAP-Rule" id="MF_00120"/>
    </source>
</evidence>
<sequence length="513" mass="54101">MSNETATLVKLSAAEQAAAIKKGDVTSRELVEAHLKVIEAAEPSIKAFLKVSGDVALEQADAFDAKSAEDKAALPELAGVPIAIKDMIVTKGIETTAASKILEGWVPPYDATVIEKLKAAGMPILGKTNLDEFAQGSSTEHSAYQTTHNPWDTERVPGGSGGGSASAVAAFEAPIALGTDTGGSIRQPGALTGTVGVKPTYGGVSRFGAIAMASSLDQIGPVSRTVLDSALLQEIIGGHDKRDSTSIPEGPRPMVAAAREGAKRDLKGMKVGLIKELGGEGFQPGVEARFGEAVDKLKDMGAEVVEVSCPHIGYSLGAYYIIMPSEVSSNLARYDGMRYGLRVMPPAGVPQTAANMMAYTREAGFGDEVKRRIILGTYALSAGYYDAWYGSAQKVRTLIIEDFKKAFEQVDVLISPTSPSTAFKFGEKMDDPLAMYVNDIATIPANLAGMPAMSIPAGLSDDGLPVGFQFIAPQQRDEVMYKPAAALEAALEDGWNGPIWNDLKTPWLDGLGK</sequence>
<organism>
    <name type="scientific">Bifidobacterium longum subsp. infantis (strain ATCC 15697 / DSM 20088 / JCM 1222 / NCTC 11817 / S12)</name>
    <dbReference type="NCBI Taxonomy" id="391904"/>
    <lineage>
        <taxon>Bacteria</taxon>
        <taxon>Bacillati</taxon>
        <taxon>Actinomycetota</taxon>
        <taxon>Actinomycetes</taxon>
        <taxon>Bifidobacteriales</taxon>
        <taxon>Bifidobacteriaceae</taxon>
        <taxon>Bifidobacterium</taxon>
    </lineage>
</organism>
<feature type="chain" id="PRO_1000122467" description="Glutamyl-tRNA(Gln) amidotransferase subunit A">
    <location>
        <begin position="1"/>
        <end position="513"/>
    </location>
</feature>
<feature type="active site" description="Charge relay system" evidence="1">
    <location>
        <position position="85"/>
    </location>
</feature>
<feature type="active site" description="Charge relay system" evidence="1">
    <location>
        <position position="160"/>
    </location>
</feature>
<feature type="active site" description="Acyl-ester intermediate" evidence="1">
    <location>
        <position position="184"/>
    </location>
</feature>
<comment type="function">
    <text evidence="1">Allows the formation of correctly charged Gln-tRNA(Gln) through the transamidation of misacylated Glu-tRNA(Gln) in organisms which lack glutaminyl-tRNA synthetase. The reaction takes place in the presence of glutamine and ATP through an activated gamma-phospho-Glu-tRNA(Gln).</text>
</comment>
<comment type="catalytic activity">
    <reaction evidence="1">
        <text>L-glutamyl-tRNA(Gln) + L-glutamine + ATP + H2O = L-glutaminyl-tRNA(Gln) + L-glutamate + ADP + phosphate + H(+)</text>
        <dbReference type="Rhea" id="RHEA:17521"/>
        <dbReference type="Rhea" id="RHEA-COMP:9681"/>
        <dbReference type="Rhea" id="RHEA-COMP:9684"/>
        <dbReference type="ChEBI" id="CHEBI:15377"/>
        <dbReference type="ChEBI" id="CHEBI:15378"/>
        <dbReference type="ChEBI" id="CHEBI:29985"/>
        <dbReference type="ChEBI" id="CHEBI:30616"/>
        <dbReference type="ChEBI" id="CHEBI:43474"/>
        <dbReference type="ChEBI" id="CHEBI:58359"/>
        <dbReference type="ChEBI" id="CHEBI:78520"/>
        <dbReference type="ChEBI" id="CHEBI:78521"/>
        <dbReference type="ChEBI" id="CHEBI:456216"/>
        <dbReference type="EC" id="6.3.5.7"/>
    </reaction>
</comment>
<comment type="subunit">
    <text evidence="1">Heterotrimer of A, B and C subunits.</text>
</comment>
<comment type="similarity">
    <text evidence="1">Belongs to the amidase family. GatA subfamily.</text>
</comment>
<dbReference type="EC" id="6.3.5.7" evidence="1"/>
<dbReference type="EMBL" id="CP001095">
    <property type="protein sequence ID" value="ACJ51387.1"/>
    <property type="molecule type" value="Genomic_DNA"/>
</dbReference>
<dbReference type="EMBL" id="AP010889">
    <property type="protein sequence ID" value="BAJ67857.1"/>
    <property type="molecule type" value="Genomic_DNA"/>
</dbReference>
<dbReference type="RefSeq" id="WP_012576700.1">
    <property type="nucleotide sequence ID" value="NC_011593.1"/>
</dbReference>
<dbReference type="SMR" id="B7GTU6"/>
<dbReference type="KEGG" id="bln:Blon_0259"/>
<dbReference type="KEGG" id="blon:BLIJ_0263"/>
<dbReference type="PATRIC" id="fig|391904.8.peg.262"/>
<dbReference type="HOGENOM" id="CLU_009600_0_3_11"/>
<dbReference type="Proteomes" id="UP000001360">
    <property type="component" value="Chromosome"/>
</dbReference>
<dbReference type="GO" id="GO:0030956">
    <property type="term" value="C:glutamyl-tRNA(Gln) amidotransferase complex"/>
    <property type="evidence" value="ECO:0007669"/>
    <property type="project" value="InterPro"/>
</dbReference>
<dbReference type="GO" id="GO:0005524">
    <property type="term" value="F:ATP binding"/>
    <property type="evidence" value="ECO:0007669"/>
    <property type="project" value="UniProtKB-KW"/>
</dbReference>
<dbReference type="GO" id="GO:0050567">
    <property type="term" value="F:glutaminyl-tRNA synthase (glutamine-hydrolyzing) activity"/>
    <property type="evidence" value="ECO:0007669"/>
    <property type="project" value="UniProtKB-UniRule"/>
</dbReference>
<dbReference type="GO" id="GO:0006412">
    <property type="term" value="P:translation"/>
    <property type="evidence" value="ECO:0007669"/>
    <property type="project" value="UniProtKB-UniRule"/>
</dbReference>
<dbReference type="Gene3D" id="3.90.1300.10">
    <property type="entry name" value="Amidase signature (AS) domain"/>
    <property type="match status" value="1"/>
</dbReference>
<dbReference type="HAMAP" id="MF_00120">
    <property type="entry name" value="GatA"/>
    <property type="match status" value="1"/>
</dbReference>
<dbReference type="InterPro" id="IPR000120">
    <property type="entry name" value="Amidase"/>
</dbReference>
<dbReference type="InterPro" id="IPR020556">
    <property type="entry name" value="Amidase_CS"/>
</dbReference>
<dbReference type="InterPro" id="IPR023631">
    <property type="entry name" value="Amidase_dom"/>
</dbReference>
<dbReference type="InterPro" id="IPR036928">
    <property type="entry name" value="AS_sf"/>
</dbReference>
<dbReference type="InterPro" id="IPR004412">
    <property type="entry name" value="GatA"/>
</dbReference>
<dbReference type="NCBIfam" id="TIGR00132">
    <property type="entry name" value="gatA"/>
    <property type="match status" value="1"/>
</dbReference>
<dbReference type="PANTHER" id="PTHR11895:SF151">
    <property type="entry name" value="GLUTAMYL-TRNA(GLN) AMIDOTRANSFERASE SUBUNIT A"/>
    <property type="match status" value="1"/>
</dbReference>
<dbReference type="PANTHER" id="PTHR11895">
    <property type="entry name" value="TRANSAMIDASE"/>
    <property type="match status" value="1"/>
</dbReference>
<dbReference type="Pfam" id="PF01425">
    <property type="entry name" value="Amidase"/>
    <property type="match status" value="1"/>
</dbReference>
<dbReference type="SUPFAM" id="SSF75304">
    <property type="entry name" value="Amidase signature (AS) enzymes"/>
    <property type="match status" value="1"/>
</dbReference>
<dbReference type="PROSITE" id="PS00571">
    <property type="entry name" value="AMIDASES"/>
    <property type="match status" value="1"/>
</dbReference>
<gene>
    <name evidence="1" type="primary">gatA</name>
    <name type="ordered locus">Blon_0259</name>
    <name type="ordered locus">BLIJ_0263</name>
</gene>
<keyword id="KW-0067">ATP-binding</keyword>
<keyword id="KW-0436">Ligase</keyword>
<keyword id="KW-0547">Nucleotide-binding</keyword>
<keyword id="KW-0648">Protein biosynthesis</keyword>
<reference key="1">
    <citation type="journal article" date="2008" name="Proc. Natl. Acad. Sci. U.S.A.">
        <title>The genome sequence of Bifidobacterium longum subsp. infantis reveals adaptations for milk utilization within the infant microbiome.</title>
        <authorList>
            <person name="Sela D.A."/>
            <person name="Chapman J."/>
            <person name="Adeuya A."/>
            <person name="Kim J.H."/>
            <person name="Chen F."/>
            <person name="Whitehead T.R."/>
            <person name="Lapidus A."/>
            <person name="Rokhsar D.S."/>
            <person name="Lebrilla C.B."/>
            <person name="German J.B."/>
            <person name="Price N.P."/>
            <person name="Richardson P.M."/>
            <person name="Mills D.A."/>
        </authorList>
    </citation>
    <scope>NUCLEOTIDE SEQUENCE [LARGE SCALE GENOMIC DNA]</scope>
    <source>
        <strain>ATCC 15697 / DSM 20088 / JCM 1222 / NCTC 11817 / S12</strain>
    </source>
</reference>
<reference key="2">
    <citation type="journal article" date="2011" name="Nature">
        <title>Bifidobacteria can protect from enteropathogenic infection through production of acetate.</title>
        <authorList>
            <person name="Fukuda S."/>
            <person name="Toh H."/>
            <person name="Hase K."/>
            <person name="Oshima K."/>
            <person name="Nakanishi Y."/>
            <person name="Yoshimura K."/>
            <person name="Tobe T."/>
            <person name="Clarke J.M."/>
            <person name="Topping D.L."/>
            <person name="Suzuki T."/>
            <person name="Taylor T.D."/>
            <person name="Itoh K."/>
            <person name="Kikuchi J."/>
            <person name="Morita H."/>
            <person name="Hattori M."/>
            <person name="Ohno H."/>
        </authorList>
    </citation>
    <scope>NUCLEOTIDE SEQUENCE [LARGE SCALE GENOMIC DNA]</scope>
    <source>
        <strain>ATCC 15697 / DSM 20088 / JCM 1222 / NCTC 11817 / S12</strain>
    </source>
</reference>
<proteinExistence type="inferred from homology"/>
<protein>
    <recommendedName>
        <fullName evidence="1">Glutamyl-tRNA(Gln) amidotransferase subunit A</fullName>
        <shortName evidence="1">Glu-ADT subunit A</shortName>
        <ecNumber evidence="1">6.3.5.7</ecNumber>
    </recommendedName>
</protein>
<name>GATA_BIFLS</name>
<accession>B7GTU6</accession>
<accession>E8MP33</accession>